<gene>
    <name evidence="1" type="primary">rps11</name>
</gene>
<dbReference type="EMBL" id="AP008956">
    <property type="protein sequence ID" value="BAE97238.1"/>
    <property type="molecule type" value="Genomic_DNA"/>
</dbReference>
<dbReference type="RefSeq" id="YP_665591.1">
    <property type="nucleotide sequence ID" value="NC_008235.1"/>
</dbReference>
<dbReference type="SMR" id="Q14FC4"/>
<dbReference type="GeneID" id="4178257"/>
<dbReference type="KEGG" id="palz:4178257"/>
<dbReference type="OrthoDB" id="18562at3646"/>
<dbReference type="GO" id="GO:0009507">
    <property type="term" value="C:chloroplast"/>
    <property type="evidence" value="ECO:0007669"/>
    <property type="project" value="UniProtKB-SubCell"/>
</dbReference>
<dbReference type="GO" id="GO:1990904">
    <property type="term" value="C:ribonucleoprotein complex"/>
    <property type="evidence" value="ECO:0007669"/>
    <property type="project" value="UniProtKB-KW"/>
</dbReference>
<dbReference type="GO" id="GO:0005840">
    <property type="term" value="C:ribosome"/>
    <property type="evidence" value="ECO:0007669"/>
    <property type="project" value="UniProtKB-KW"/>
</dbReference>
<dbReference type="GO" id="GO:0019843">
    <property type="term" value="F:rRNA binding"/>
    <property type="evidence" value="ECO:0007669"/>
    <property type="project" value="UniProtKB-UniRule"/>
</dbReference>
<dbReference type="GO" id="GO:0003735">
    <property type="term" value="F:structural constituent of ribosome"/>
    <property type="evidence" value="ECO:0007669"/>
    <property type="project" value="InterPro"/>
</dbReference>
<dbReference type="GO" id="GO:0006412">
    <property type="term" value="P:translation"/>
    <property type="evidence" value="ECO:0007669"/>
    <property type="project" value="UniProtKB-UniRule"/>
</dbReference>
<dbReference type="FunFam" id="3.30.420.80:FF:000003">
    <property type="entry name" value="30S ribosomal protein S11, chloroplastic"/>
    <property type="match status" value="1"/>
</dbReference>
<dbReference type="Gene3D" id="3.30.420.80">
    <property type="entry name" value="Ribosomal protein S11"/>
    <property type="match status" value="1"/>
</dbReference>
<dbReference type="HAMAP" id="MF_01310">
    <property type="entry name" value="Ribosomal_uS11"/>
    <property type="match status" value="1"/>
</dbReference>
<dbReference type="InterPro" id="IPR001971">
    <property type="entry name" value="Ribosomal_uS11"/>
</dbReference>
<dbReference type="InterPro" id="IPR019981">
    <property type="entry name" value="Ribosomal_uS11_bac-type"/>
</dbReference>
<dbReference type="InterPro" id="IPR018102">
    <property type="entry name" value="Ribosomal_uS11_CS"/>
</dbReference>
<dbReference type="InterPro" id="IPR036967">
    <property type="entry name" value="Ribosomal_uS11_sf"/>
</dbReference>
<dbReference type="NCBIfam" id="NF003698">
    <property type="entry name" value="PRK05309.1"/>
    <property type="match status" value="1"/>
</dbReference>
<dbReference type="NCBIfam" id="TIGR03632">
    <property type="entry name" value="uS11_bact"/>
    <property type="match status" value="1"/>
</dbReference>
<dbReference type="PANTHER" id="PTHR11759">
    <property type="entry name" value="40S RIBOSOMAL PROTEIN S14/30S RIBOSOMAL PROTEIN S11"/>
    <property type="match status" value="1"/>
</dbReference>
<dbReference type="Pfam" id="PF00411">
    <property type="entry name" value="Ribosomal_S11"/>
    <property type="match status" value="1"/>
</dbReference>
<dbReference type="PIRSF" id="PIRSF002131">
    <property type="entry name" value="Ribosomal_S11"/>
    <property type="match status" value="1"/>
</dbReference>
<dbReference type="SUPFAM" id="SSF53137">
    <property type="entry name" value="Translational machinery components"/>
    <property type="match status" value="1"/>
</dbReference>
<dbReference type="PROSITE" id="PS00054">
    <property type="entry name" value="RIBOSOMAL_S11"/>
    <property type="match status" value="1"/>
</dbReference>
<feature type="chain" id="PRO_0000276656" description="Small ribosomal subunit protein uS11c">
    <location>
        <begin position="1"/>
        <end position="138"/>
    </location>
</feature>
<feature type="region of interest" description="Disordered" evidence="2">
    <location>
        <begin position="1"/>
        <end position="22"/>
    </location>
</feature>
<feature type="compositionally biased region" description="Basic residues" evidence="2">
    <location>
        <begin position="9"/>
        <end position="22"/>
    </location>
</feature>
<protein>
    <recommendedName>
        <fullName evidence="1">Small ribosomal subunit protein uS11c</fullName>
    </recommendedName>
    <alternativeName>
        <fullName evidence="3">30S ribosomal protein S11, chloroplastic</fullName>
    </alternativeName>
</protein>
<proteinExistence type="inferred from homology"/>
<organism>
    <name type="scientific">Populus alba</name>
    <name type="common">White poplar</name>
    <dbReference type="NCBI Taxonomy" id="43335"/>
    <lineage>
        <taxon>Eukaryota</taxon>
        <taxon>Viridiplantae</taxon>
        <taxon>Streptophyta</taxon>
        <taxon>Embryophyta</taxon>
        <taxon>Tracheophyta</taxon>
        <taxon>Spermatophyta</taxon>
        <taxon>Magnoliopsida</taxon>
        <taxon>eudicotyledons</taxon>
        <taxon>Gunneridae</taxon>
        <taxon>Pentapetalae</taxon>
        <taxon>rosids</taxon>
        <taxon>fabids</taxon>
        <taxon>Malpighiales</taxon>
        <taxon>Salicaceae</taxon>
        <taxon>Saliceae</taxon>
        <taxon>Populus</taxon>
    </lineage>
</organism>
<comment type="subunit">
    <text evidence="1">Part of the 30S ribosomal subunit.</text>
</comment>
<comment type="subcellular location">
    <subcellularLocation>
        <location>Plastid</location>
        <location>Chloroplast</location>
    </subcellularLocation>
</comment>
<comment type="similarity">
    <text evidence="1">Belongs to the universal ribosomal protein uS11 family.</text>
</comment>
<evidence type="ECO:0000255" key="1">
    <source>
        <dbReference type="HAMAP-Rule" id="MF_01310"/>
    </source>
</evidence>
<evidence type="ECO:0000256" key="2">
    <source>
        <dbReference type="SAM" id="MobiDB-lite"/>
    </source>
</evidence>
<evidence type="ECO:0000305" key="3"/>
<reference key="1">
    <citation type="submission" date="2005-03" db="EMBL/GenBank/DDBJ databases">
        <title>Complete structure of the chloroplast genome of Populus alba.</title>
        <authorList>
            <person name="Okumura S."/>
            <person name="Yamashita A."/>
            <person name="Kanamoto H."/>
            <person name="Hattori M."/>
            <person name="Takase H."/>
            <person name="Tomizawa K."/>
        </authorList>
    </citation>
    <scope>NUCLEOTIDE SEQUENCE [LARGE SCALE GENOMIC DNA]</scope>
</reference>
<accession>Q14FC4</accession>
<name>RR11_POPAL</name>
<geneLocation type="chloroplast"/>
<keyword id="KW-0150">Chloroplast</keyword>
<keyword id="KW-0934">Plastid</keyword>
<keyword id="KW-0687">Ribonucleoprotein</keyword>
<keyword id="KW-0689">Ribosomal protein</keyword>
<keyword id="KW-0694">RNA-binding</keyword>
<keyword id="KW-0699">rRNA-binding</keyword>
<sequence length="138" mass="14955">MAKLLPRIGSRKNGRISSRKNARKIPKGVIHVQASFNNTIVTVTDVRGRVISWSSAGACGFRGTRRGTPFAAQTAAGNAIRTVVDQGMQRAEVMIKGPGLGRDAALRAIRRSGILLSFVRDVTPMPHNGCRPPKKRRV</sequence>